<proteinExistence type="inferred from homology"/>
<protein>
    <recommendedName>
        <fullName evidence="1">Porphobilinogen deaminase</fullName>
        <shortName evidence="1">PBG</shortName>
        <ecNumber evidence="1">2.5.1.61</ecNumber>
    </recommendedName>
    <alternativeName>
        <fullName evidence="1">Hydroxymethylbilane synthase</fullName>
        <shortName evidence="1">HMBS</shortName>
    </alternativeName>
    <alternativeName>
        <fullName evidence="1">Pre-uroporphyrinogen synthase</fullName>
    </alternativeName>
</protein>
<sequence>MRKIIVGSRKSKLALTQTNWFIDQLKALGLPYEFEVKEIVTKGDVILDVTLSKVGGKGLFVKEIEHALLTKEIDMAVHSMKDMPAVLPEGLMIGCTPKRVDPRDAFISKSGASFKELAEGAILGTSSLRRSAQLLAARPDLQVKWIRGNIDTRLRKLKEEDYDAIILATAGLQRMGWDNEVITEHLDETLCVPAVGQGALAIECREDDKDLLQLLAHINDAVTEKTVAAERVFLHKLEGGCQVPIAGYATLTENDAIELTALVGSMDGSVLLKETVVGTDPEKVGLEAADRLIKQGAKELILAANKGQQ</sequence>
<accession>C1ETR0</accession>
<gene>
    <name evidence="1" type="primary">hemC</name>
    <name type="ordered locus">BCA_4576</name>
</gene>
<dbReference type="EC" id="2.5.1.61" evidence="1"/>
<dbReference type="EMBL" id="CP001407">
    <property type="protein sequence ID" value="ACO27943.1"/>
    <property type="molecule type" value="Genomic_DNA"/>
</dbReference>
<dbReference type="RefSeq" id="WP_001226419.1">
    <property type="nucleotide sequence ID" value="NZ_CP009318.1"/>
</dbReference>
<dbReference type="SMR" id="C1ETR0"/>
<dbReference type="KEGG" id="bcx:BCA_4576"/>
<dbReference type="PATRIC" id="fig|572264.18.peg.4524"/>
<dbReference type="UniPathway" id="UPA00251">
    <property type="reaction ID" value="UER00319"/>
</dbReference>
<dbReference type="Proteomes" id="UP000002210">
    <property type="component" value="Chromosome"/>
</dbReference>
<dbReference type="GO" id="GO:0005737">
    <property type="term" value="C:cytoplasm"/>
    <property type="evidence" value="ECO:0007669"/>
    <property type="project" value="TreeGrafter"/>
</dbReference>
<dbReference type="GO" id="GO:0004418">
    <property type="term" value="F:hydroxymethylbilane synthase activity"/>
    <property type="evidence" value="ECO:0007669"/>
    <property type="project" value="UniProtKB-UniRule"/>
</dbReference>
<dbReference type="GO" id="GO:0006782">
    <property type="term" value="P:protoporphyrinogen IX biosynthetic process"/>
    <property type="evidence" value="ECO:0007669"/>
    <property type="project" value="UniProtKB-UniRule"/>
</dbReference>
<dbReference type="CDD" id="cd13646">
    <property type="entry name" value="PBP2_EcHMBS_like"/>
    <property type="match status" value="1"/>
</dbReference>
<dbReference type="FunFam" id="3.30.160.40:FF:000001">
    <property type="entry name" value="Porphobilinogen deaminase"/>
    <property type="match status" value="1"/>
</dbReference>
<dbReference type="FunFam" id="3.40.190.10:FF:000004">
    <property type="entry name" value="Porphobilinogen deaminase"/>
    <property type="match status" value="1"/>
</dbReference>
<dbReference type="FunFam" id="3.40.190.10:FF:000005">
    <property type="entry name" value="Porphobilinogen deaminase"/>
    <property type="match status" value="1"/>
</dbReference>
<dbReference type="Gene3D" id="3.40.190.10">
    <property type="entry name" value="Periplasmic binding protein-like II"/>
    <property type="match status" value="2"/>
</dbReference>
<dbReference type="Gene3D" id="3.30.160.40">
    <property type="entry name" value="Porphobilinogen deaminase, C-terminal domain"/>
    <property type="match status" value="1"/>
</dbReference>
<dbReference type="HAMAP" id="MF_00260">
    <property type="entry name" value="Porphobil_deam"/>
    <property type="match status" value="1"/>
</dbReference>
<dbReference type="InterPro" id="IPR000860">
    <property type="entry name" value="HemC"/>
</dbReference>
<dbReference type="InterPro" id="IPR022419">
    <property type="entry name" value="Porphobilin_deaminase_cofac_BS"/>
</dbReference>
<dbReference type="InterPro" id="IPR022417">
    <property type="entry name" value="Porphobilin_deaminase_N"/>
</dbReference>
<dbReference type="InterPro" id="IPR022418">
    <property type="entry name" value="Porphobilinogen_deaminase_C"/>
</dbReference>
<dbReference type="InterPro" id="IPR036803">
    <property type="entry name" value="Porphobilinogen_deaminase_C_sf"/>
</dbReference>
<dbReference type="NCBIfam" id="TIGR00212">
    <property type="entry name" value="hemC"/>
    <property type="match status" value="1"/>
</dbReference>
<dbReference type="PANTHER" id="PTHR11557">
    <property type="entry name" value="PORPHOBILINOGEN DEAMINASE"/>
    <property type="match status" value="1"/>
</dbReference>
<dbReference type="PANTHER" id="PTHR11557:SF0">
    <property type="entry name" value="PORPHOBILINOGEN DEAMINASE"/>
    <property type="match status" value="1"/>
</dbReference>
<dbReference type="Pfam" id="PF01379">
    <property type="entry name" value="Porphobil_deam"/>
    <property type="match status" value="1"/>
</dbReference>
<dbReference type="Pfam" id="PF03900">
    <property type="entry name" value="Porphobil_deamC"/>
    <property type="match status" value="1"/>
</dbReference>
<dbReference type="PIRSF" id="PIRSF001438">
    <property type="entry name" value="4pyrrol_synth_OHMeBilane_synth"/>
    <property type="match status" value="1"/>
</dbReference>
<dbReference type="PRINTS" id="PR00151">
    <property type="entry name" value="PORPHBDMNASE"/>
</dbReference>
<dbReference type="SUPFAM" id="SSF53850">
    <property type="entry name" value="Periplasmic binding protein-like II"/>
    <property type="match status" value="1"/>
</dbReference>
<dbReference type="SUPFAM" id="SSF54782">
    <property type="entry name" value="Porphobilinogen deaminase (hydroxymethylbilane synthase), C-terminal domain"/>
    <property type="match status" value="1"/>
</dbReference>
<dbReference type="PROSITE" id="PS00533">
    <property type="entry name" value="PORPHOBILINOGEN_DEAM"/>
    <property type="match status" value="1"/>
</dbReference>
<evidence type="ECO:0000255" key="1">
    <source>
        <dbReference type="HAMAP-Rule" id="MF_00260"/>
    </source>
</evidence>
<feature type="chain" id="PRO_1000125653" description="Porphobilinogen deaminase">
    <location>
        <begin position="1"/>
        <end position="309"/>
    </location>
</feature>
<feature type="modified residue" description="S-(dipyrrolylmethanemethyl)cysteine" evidence="1">
    <location>
        <position position="241"/>
    </location>
</feature>
<comment type="function">
    <text evidence="1">Tetrapolymerization of the monopyrrole PBG into the hydroxymethylbilane pre-uroporphyrinogen in several discrete steps.</text>
</comment>
<comment type="catalytic activity">
    <reaction evidence="1">
        <text>4 porphobilinogen + H2O = hydroxymethylbilane + 4 NH4(+)</text>
        <dbReference type="Rhea" id="RHEA:13185"/>
        <dbReference type="ChEBI" id="CHEBI:15377"/>
        <dbReference type="ChEBI" id="CHEBI:28938"/>
        <dbReference type="ChEBI" id="CHEBI:57845"/>
        <dbReference type="ChEBI" id="CHEBI:58126"/>
        <dbReference type="EC" id="2.5.1.61"/>
    </reaction>
</comment>
<comment type="cofactor">
    <cofactor evidence="1">
        <name>dipyrromethane</name>
        <dbReference type="ChEBI" id="CHEBI:60342"/>
    </cofactor>
    <text evidence="1">Binds 1 dipyrromethane group covalently.</text>
</comment>
<comment type="pathway">
    <text evidence="1">Porphyrin-containing compound metabolism; protoporphyrin-IX biosynthesis; coproporphyrinogen-III from 5-aminolevulinate: step 2/4.</text>
</comment>
<comment type="subunit">
    <text evidence="1">Monomer.</text>
</comment>
<comment type="miscellaneous">
    <text evidence="1">The porphobilinogen subunits are added to the dipyrromethane group.</text>
</comment>
<comment type="similarity">
    <text evidence="1">Belongs to the HMBS family.</text>
</comment>
<organism>
    <name type="scientific">Bacillus cereus (strain 03BB102)</name>
    <dbReference type="NCBI Taxonomy" id="572264"/>
    <lineage>
        <taxon>Bacteria</taxon>
        <taxon>Bacillati</taxon>
        <taxon>Bacillota</taxon>
        <taxon>Bacilli</taxon>
        <taxon>Bacillales</taxon>
        <taxon>Bacillaceae</taxon>
        <taxon>Bacillus</taxon>
        <taxon>Bacillus cereus group</taxon>
    </lineage>
</organism>
<name>HEM3_BACC3</name>
<keyword id="KW-0627">Porphyrin biosynthesis</keyword>
<keyword id="KW-0808">Transferase</keyword>
<reference key="1">
    <citation type="submission" date="2009-02" db="EMBL/GenBank/DDBJ databases">
        <title>Genome sequence of Bacillus cereus 03BB102.</title>
        <authorList>
            <person name="Dodson R.J."/>
            <person name="Jackson P."/>
            <person name="Munk A.C."/>
            <person name="Brettin T."/>
            <person name="Bruce D."/>
            <person name="Detter C."/>
            <person name="Tapia R."/>
            <person name="Han C."/>
            <person name="Sutton G."/>
            <person name="Sims D."/>
        </authorList>
    </citation>
    <scope>NUCLEOTIDE SEQUENCE [LARGE SCALE GENOMIC DNA]</scope>
    <source>
        <strain>03BB102</strain>
    </source>
</reference>